<reference key="1">
    <citation type="journal article" date="2010" name="Genome Biol.">
        <title>Structure and dynamics of the pan-genome of Streptococcus pneumoniae and closely related species.</title>
        <authorList>
            <person name="Donati C."/>
            <person name="Hiller N.L."/>
            <person name="Tettelin H."/>
            <person name="Muzzi A."/>
            <person name="Croucher N.J."/>
            <person name="Angiuoli S.V."/>
            <person name="Oggioni M."/>
            <person name="Dunning Hotopp J.C."/>
            <person name="Hu F.Z."/>
            <person name="Riley D.R."/>
            <person name="Covacci A."/>
            <person name="Mitchell T.J."/>
            <person name="Bentley S.D."/>
            <person name="Kilian M."/>
            <person name="Ehrlich G.D."/>
            <person name="Rappuoli R."/>
            <person name="Moxon E.R."/>
            <person name="Masignani V."/>
        </authorList>
    </citation>
    <scope>NUCLEOTIDE SEQUENCE [LARGE SCALE GENOMIC DNA]</scope>
    <source>
        <strain>70585</strain>
    </source>
</reference>
<proteinExistence type="inferred from homology"/>
<organism>
    <name type="scientific">Streptococcus pneumoniae (strain 70585)</name>
    <dbReference type="NCBI Taxonomy" id="488221"/>
    <lineage>
        <taxon>Bacteria</taxon>
        <taxon>Bacillati</taxon>
        <taxon>Bacillota</taxon>
        <taxon>Bacilli</taxon>
        <taxon>Lactobacillales</taxon>
        <taxon>Streptococcaceae</taxon>
        <taxon>Streptococcus</taxon>
    </lineage>
</organism>
<dbReference type="EC" id="4.3.3.6" evidence="1"/>
<dbReference type="EMBL" id="CP000918">
    <property type="protein sequence ID" value="ACO17777.1"/>
    <property type="molecule type" value="Genomic_DNA"/>
</dbReference>
<dbReference type="RefSeq" id="WP_000138517.1">
    <property type="nucleotide sequence ID" value="NC_012468.1"/>
</dbReference>
<dbReference type="SMR" id="C1C863"/>
<dbReference type="GeneID" id="45653282"/>
<dbReference type="KEGG" id="snm:SP70585_1509"/>
<dbReference type="HOGENOM" id="CLU_055352_1_0_9"/>
<dbReference type="UniPathway" id="UPA00245"/>
<dbReference type="Proteomes" id="UP000002211">
    <property type="component" value="Chromosome"/>
</dbReference>
<dbReference type="GO" id="GO:0036381">
    <property type="term" value="F:pyridoxal 5'-phosphate synthase (glutamine hydrolysing) activity"/>
    <property type="evidence" value="ECO:0007669"/>
    <property type="project" value="UniProtKB-UniRule"/>
</dbReference>
<dbReference type="GO" id="GO:0006520">
    <property type="term" value="P:amino acid metabolic process"/>
    <property type="evidence" value="ECO:0007669"/>
    <property type="project" value="TreeGrafter"/>
</dbReference>
<dbReference type="GO" id="GO:0042823">
    <property type="term" value="P:pyridoxal phosphate biosynthetic process"/>
    <property type="evidence" value="ECO:0007669"/>
    <property type="project" value="UniProtKB-UniRule"/>
</dbReference>
<dbReference type="GO" id="GO:0008615">
    <property type="term" value="P:pyridoxine biosynthetic process"/>
    <property type="evidence" value="ECO:0007669"/>
    <property type="project" value="TreeGrafter"/>
</dbReference>
<dbReference type="CDD" id="cd04727">
    <property type="entry name" value="pdxS"/>
    <property type="match status" value="1"/>
</dbReference>
<dbReference type="FunFam" id="3.20.20.70:FF:000001">
    <property type="entry name" value="Pyridoxine biosynthesis protein PDX1"/>
    <property type="match status" value="1"/>
</dbReference>
<dbReference type="Gene3D" id="3.20.20.70">
    <property type="entry name" value="Aldolase class I"/>
    <property type="match status" value="1"/>
</dbReference>
<dbReference type="HAMAP" id="MF_01824">
    <property type="entry name" value="PdxS"/>
    <property type="match status" value="1"/>
</dbReference>
<dbReference type="InterPro" id="IPR013785">
    <property type="entry name" value="Aldolase_TIM"/>
</dbReference>
<dbReference type="InterPro" id="IPR001852">
    <property type="entry name" value="PdxS/SNZ"/>
</dbReference>
<dbReference type="InterPro" id="IPR033755">
    <property type="entry name" value="PdxS/SNZ_N"/>
</dbReference>
<dbReference type="InterPro" id="IPR011060">
    <property type="entry name" value="RibuloseP-bd_barrel"/>
</dbReference>
<dbReference type="NCBIfam" id="NF003215">
    <property type="entry name" value="PRK04180.1"/>
    <property type="match status" value="1"/>
</dbReference>
<dbReference type="NCBIfam" id="TIGR00343">
    <property type="entry name" value="pyridoxal 5'-phosphate synthase lyase subunit PdxS"/>
    <property type="match status" value="1"/>
</dbReference>
<dbReference type="PANTHER" id="PTHR31829">
    <property type="entry name" value="PYRIDOXAL 5'-PHOSPHATE SYNTHASE SUBUNIT SNZ1-RELATED"/>
    <property type="match status" value="1"/>
</dbReference>
<dbReference type="PANTHER" id="PTHR31829:SF0">
    <property type="entry name" value="PYRIDOXAL 5'-PHOSPHATE SYNTHASE SUBUNIT SNZ1-RELATED"/>
    <property type="match status" value="1"/>
</dbReference>
<dbReference type="Pfam" id="PF01680">
    <property type="entry name" value="SOR_SNZ"/>
    <property type="match status" value="1"/>
</dbReference>
<dbReference type="PIRSF" id="PIRSF029271">
    <property type="entry name" value="Pdx1"/>
    <property type="match status" value="1"/>
</dbReference>
<dbReference type="SUPFAM" id="SSF51366">
    <property type="entry name" value="Ribulose-phoshate binding barrel"/>
    <property type="match status" value="1"/>
</dbReference>
<dbReference type="PROSITE" id="PS01235">
    <property type="entry name" value="PDXS_SNZ_1"/>
    <property type="match status" value="1"/>
</dbReference>
<dbReference type="PROSITE" id="PS51129">
    <property type="entry name" value="PDXS_SNZ_2"/>
    <property type="match status" value="1"/>
</dbReference>
<sequence>MTENRYELNKNLAQMLKGGVIMDVQNPEQARIAEAAGAAAVMALERIPADIRAAGGVSRMSDPKMIKEIQEAVSIPVMAKVRIGHFVEAQILEAIEIDYIDESEVLSPADDRFHVDKKEFQVPFVCGAKDLGEALRRIAEGASMIRTKGEPGTGDIVQAVRHMRMMNQEIRRIQNLREDELYVAAKDLQVPVELVQYVHEHGKLPVVNFAAGGVATPADAALMMQLGAEGVFVGSGIFKSGDPVKRASAIVKAVTNFRNPQILAQISEDLGEAMVGINENEIQILMAERGK</sequence>
<evidence type="ECO:0000255" key="1">
    <source>
        <dbReference type="HAMAP-Rule" id="MF_01824"/>
    </source>
</evidence>
<name>PDXS_STRP7</name>
<keyword id="KW-0456">Lyase</keyword>
<keyword id="KW-0663">Pyridoxal phosphate</keyword>
<keyword id="KW-0704">Schiff base</keyword>
<accession>C1C863</accession>
<gene>
    <name evidence="1" type="primary">pdxS</name>
    <name type="ordered locus">SP70585_1509</name>
</gene>
<comment type="function">
    <text evidence="1">Catalyzes the formation of pyridoxal 5'-phosphate from ribose 5-phosphate (RBP), glyceraldehyde 3-phosphate (G3P) and ammonia. The ammonia is provided by the PdxT subunit. Can also use ribulose 5-phosphate and dihydroxyacetone phosphate as substrates, resulting from enzyme-catalyzed isomerization of RBP and G3P, respectively.</text>
</comment>
<comment type="catalytic activity">
    <reaction evidence="1">
        <text>aldehydo-D-ribose 5-phosphate + D-glyceraldehyde 3-phosphate + L-glutamine = pyridoxal 5'-phosphate + L-glutamate + phosphate + 3 H2O + H(+)</text>
        <dbReference type="Rhea" id="RHEA:31507"/>
        <dbReference type="ChEBI" id="CHEBI:15377"/>
        <dbReference type="ChEBI" id="CHEBI:15378"/>
        <dbReference type="ChEBI" id="CHEBI:29985"/>
        <dbReference type="ChEBI" id="CHEBI:43474"/>
        <dbReference type="ChEBI" id="CHEBI:58273"/>
        <dbReference type="ChEBI" id="CHEBI:58359"/>
        <dbReference type="ChEBI" id="CHEBI:59776"/>
        <dbReference type="ChEBI" id="CHEBI:597326"/>
        <dbReference type="EC" id="4.3.3.6"/>
    </reaction>
</comment>
<comment type="pathway">
    <text evidence="1">Cofactor biosynthesis; pyridoxal 5'-phosphate biosynthesis.</text>
</comment>
<comment type="subunit">
    <text evidence="1">In the presence of PdxT, forms a dodecamer of heterodimers.</text>
</comment>
<comment type="similarity">
    <text evidence="1">Belongs to the PdxS/SNZ family.</text>
</comment>
<feature type="chain" id="PRO_1000188241" description="Pyridoxal 5'-phosphate synthase subunit PdxS">
    <location>
        <begin position="1"/>
        <end position="291"/>
    </location>
</feature>
<feature type="active site" description="Schiff-base intermediate with D-ribose 5-phosphate" evidence="1">
    <location>
        <position position="80"/>
    </location>
</feature>
<feature type="binding site" evidence="1">
    <location>
        <position position="23"/>
    </location>
    <ligand>
        <name>D-ribose 5-phosphate</name>
        <dbReference type="ChEBI" id="CHEBI:78346"/>
    </ligand>
</feature>
<feature type="binding site" evidence="1">
    <location>
        <position position="152"/>
    </location>
    <ligand>
        <name>D-ribose 5-phosphate</name>
        <dbReference type="ChEBI" id="CHEBI:78346"/>
    </ligand>
</feature>
<feature type="binding site" evidence="1">
    <location>
        <position position="164"/>
    </location>
    <ligand>
        <name>D-glyceraldehyde 3-phosphate</name>
        <dbReference type="ChEBI" id="CHEBI:59776"/>
    </ligand>
</feature>
<feature type="binding site" evidence="1">
    <location>
        <position position="213"/>
    </location>
    <ligand>
        <name>D-ribose 5-phosphate</name>
        <dbReference type="ChEBI" id="CHEBI:78346"/>
    </ligand>
</feature>
<feature type="binding site" evidence="1">
    <location>
        <begin position="234"/>
        <end position="235"/>
    </location>
    <ligand>
        <name>D-ribose 5-phosphate</name>
        <dbReference type="ChEBI" id="CHEBI:78346"/>
    </ligand>
</feature>
<protein>
    <recommendedName>
        <fullName evidence="1">Pyridoxal 5'-phosphate synthase subunit PdxS</fullName>
        <shortName evidence="1">PLP synthase subunit PdxS</shortName>
        <ecNumber evidence="1">4.3.3.6</ecNumber>
    </recommendedName>
    <alternativeName>
        <fullName evidence="1">Pdx1</fullName>
    </alternativeName>
</protein>